<reference key="1">
    <citation type="journal article" date="1994" name="J. Biochem.">
        <title>Molecular cloning and nucleotide sequences of cDNAs encoding subunits I, II, and IX of Euglena gracilis mitochondrial complex III.</title>
        <authorList>
            <person name="Cui J.-Y."/>
            <person name="Mukai K."/>
            <person name="Saeki K."/>
            <person name="Matsubara H."/>
        </authorList>
    </citation>
    <scope>NUCLEOTIDE SEQUENCE [MRNA]</scope>
    <scope>PROTEIN SEQUENCE OF 31-48</scope>
    <source>
        <strain>SM-ZK</strain>
    </source>
</reference>
<dbReference type="EMBL" id="D16673">
    <property type="protein sequence ID" value="BAA04081.2"/>
    <property type="status" value="ALT_SEQ"/>
    <property type="molecule type" value="mRNA"/>
</dbReference>
<dbReference type="PIR" id="JX0302">
    <property type="entry name" value="JX0302"/>
</dbReference>
<dbReference type="PDB" id="8IUF">
    <property type="method" value="EM"/>
    <property type="resolution" value="2.81 A"/>
    <property type="chains" value="QK/Qk=1-100"/>
</dbReference>
<dbReference type="PDB" id="8IUJ">
    <property type="method" value="EM"/>
    <property type="resolution" value="3.06 A"/>
    <property type="chains" value="QK/Qk=1-100"/>
</dbReference>
<dbReference type="PDBsum" id="8IUF"/>
<dbReference type="PDBsum" id="8IUJ"/>
<dbReference type="EMDB" id="EMD-35720"/>
<dbReference type="EMDB" id="EMD-35723"/>
<dbReference type="SMR" id="P43266"/>
<dbReference type="GO" id="GO:0005743">
    <property type="term" value="C:mitochondrial inner membrane"/>
    <property type="evidence" value="ECO:0007669"/>
    <property type="project" value="UniProtKB-SubCell"/>
</dbReference>
<organism>
    <name type="scientific">Euglena gracilis</name>
    <dbReference type="NCBI Taxonomy" id="3039"/>
    <lineage>
        <taxon>Eukaryota</taxon>
        <taxon>Discoba</taxon>
        <taxon>Euglenozoa</taxon>
        <taxon>Euglenida</taxon>
        <taxon>Spirocuta</taxon>
        <taxon>Euglenophyceae</taxon>
        <taxon>Euglenales</taxon>
        <taxon>Euglenaceae</taxon>
        <taxon>Euglena</taxon>
    </lineage>
</organism>
<keyword id="KW-0002">3D-structure</keyword>
<keyword id="KW-0903">Direct protein sequencing</keyword>
<keyword id="KW-0249">Electron transport</keyword>
<keyword id="KW-0472">Membrane</keyword>
<keyword id="KW-0496">Mitochondrion</keyword>
<keyword id="KW-0999">Mitochondrion inner membrane</keyword>
<keyword id="KW-0679">Respiratory chain</keyword>
<keyword id="KW-0809">Transit peptide</keyword>
<keyword id="KW-0812">Transmembrane</keyword>
<keyword id="KW-1133">Transmembrane helix</keyword>
<keyword id="KW-0813">Transport</keyword>
<evidence type="ECO:0000255" key="1"/>
<evidence type="ECO:0000269" key="2">
    <source>
    </source>
</evidence>
<evidence type="ECO:0000305" key="3"/>
<proteinExistence type="evidence at protein level"/>
<feature type="transit peptide" description="Mitochondrion" evidence="2">
    <location>
        <begin position="1"/>
        <end position="30"/>
    </location>
</feature>
<feature type="chain" id="PRO_0000035996" description="Ubiquinol-cytochrome-C reductase complex subunit IX, mitochondrial">
    <location>
        <begin position="31"/>
        <end position="100"/>
    </location>
</feature>
<feature type="transmembrane region" description="Helical" evidence="1">
    <location>
        <begin position="66"/>
        <end position="86"/>
    </location>
</feature>
<name>UCR9_EUGGR</name>
<comment type="function">
    <text>This is a component of the ubiquinol-cytochrome c reductase complex (complex III or cytochrome b-c1 complex), which is part of the mitochondrial respiratory chain.</text>
</comment>
<comment type="subunit">
    <text>Plants bc1 complex contains 10 subunits; 3 respiratory subunits, 2 core proteins and 5 low-molecular weight proteins.</text>
</comment>
<comment type="subcellular location">
    <subcellularLocation>
        <location>Mitochondrion inner membrane</location>
    </subcellularLocation>
</comment>
<comment type="sequence caution" evidence="3">
    <conflict type="miscellaneous discrepancy">
        <sequence resource="EMBL-CDS" id="BAA04081"/>
    </conflict>
    <text>Incorrect translation table.</text>
</comment>
<accession>P43266</accession>
<sequence>MQTHVRRVALQALRPCLRAGLMAPKFPVRFATTAVSGELLTKTPYTRPGYAAQWTCLVVLFLKNQLLMRLFFAFVAYVVAMKVFGARFHVDHDEDATPAE</sequence>
<protein>
    <recommendedName>
        <fullName>Ubiquinol-cytochrome-C reductase complex subunit IX, mitochondrial</fullName>
    </recommendedName>
</protein>